<organism>
    <name type="scientific">Opuntia quimilo</name>
    <name type="common">Cactus</name>
    <dbReference type="NCBI Taxonomy" id="154407"/>
    <lineage>
        <taxon>Eukaryota</taxon>
        <taxon>Viridiplantae</taxon>
        <taxon>Streptophyta</taxon>
        <taxon>Embryophyta</taxon>
        <taxon>Tracheophyta</taxon>
        <taxon>Spermatophyta</taxon>
        <taxon>Magnoliopsida</taxon>
        <taxon>eudicotyledons</taxon>
        <taxon>Gunneridae</taxon>
        <taxon>Pentapetalae</taxon>
        <taxon>Caryophyllales</taxon>
        <taxon>Cactineae</taxon>
        <taxon>Cactaceae</taxon>
        <taxon>Opuntioideae</taxon>
        <taxon>Opuntia</taxon>
    </lineage>
</organism>
<keyword id="KW-0150">Chloroplast</keyword>
<keyword id="KW-0507">mRNA processing</keyword>
<keyword id="KW-0934">Plastid</keyword>
<keyword id="KW-0694">RNA-binding</keyword>
<keyword id="KW-0819">tRNA processing</keyword>
<dbReference type="EMBL" id="AY015279">
    <property type="protein sequence ID" value="AAK19766.1"/>
    <property type="molecule type" value="Genomic_DNA"/>
</dbReference>
<dbReference type="RefSeq" id="YP_010967161.1">
    <property type="nucleotide sequence ID" value="NC_083949.1"/>
</dbReference>
<dbReference type="GeneID" id="86100151"/>
<dbReference type="GO" id="GO:0009507">
    <property type="term" value="C:chloroplast"/>
    <property type="evidence" value="ECO:0007669"/>
    <property type="project" value="UniProtKB-SubCell"/>
</dbReference>
<dbReference type="GO" id="GO:0003723">
    <property type="term" value="F:RNA binding"/>
    <property type="evidence" value="ECO:0007669"/>
    <property type="project" value="UniProtKB-KW"/>
</dbReference>
<dbReference type="GO" id="GO:0006397">
    <property type="term" value="P:mRNA processing"/>
    <property type="evidence" value="ECO:0007669"/>
    <property type="project" value="UniProtKB-KW"/>
</dbReference>
<dbReference type="GO" id="GO:0008380">
    <property type="term" value="P:RNA splicing"/>
    <property type="evidence" value="ECO:0007669"/>
    <property type="project" value="UniProtKB-UniRule"/>
</dbReference>
<dbReference type="GO" id="GO:0008033">
    <property type="term" value="P:tRNA processing"/>
    <property type="evidence" value="ECO:0007669"/>
    <property type="project" value="UniProtKB-KW"/>
</dbReference>
<dbReference type="HAMAP" id="MF_01390">
    <property type="entry name" value="MatK"/>
    <property type="match status" value="1"/>
</dbReference>
<dbReference type="InterPro" id="IPR024937">
    <property type="entry name" value="Domain_X"/>
</dbReference>
<dbReference type="InterPro" id="IPR002866">
    <property type="entry name" value="Maturase_MatK"/>
</dbReference>
<dbReference type="InterPro" id="IPR024942">
    <property type="entry name" value="Maturase_MatK_N"/>
</dbReference>
<dbReference type="PANTHER" id="PTHR34811">
    <property type="entry name" value="MATURASE K"/>
    <property type="match status" value="1"/>
</dbReference>
<dbReference type="PANTHER" id="PTHR34811:SF1">
    <property type="entry name" value="MATURASE K"/>
    <property type="match status" value="1"/>
</dbReference>
<dbReference type="Pfam" id="PF01348">
    <property type="entry name" value="Intron_maturas2"/>
    <property type="match status" value="1"/>
</dbReference>
<dbReference type="Pfam" id="PF01824">
    <property type="entry name" value="MatK_N"/>
    <property type="match status" value="1"/>
</dbReference>
<comment type="function">
    <text evidence="1">Usually encoded in the trnK tRNA gene intron. Probably assists in splicing its own and other chloroplast group II introns.</text>
</comment>
<comment type="subcellular location">
    <subcellularLocation>
        <location>Plastid</location>
        <location>Chloroplast</location>
    </subcellularLocation>
</comment>
<comment type="similarity">
    <text evidence="1">Belongs to the intron maturase 2 family. MatK subfamily.</text>
</comment>
<gene>
    <name evidence="1" type="primary">matK</name>
</gene>
<reference key="1">
    <citation type="journal article" date="2002" name="Am. J. Bot.">
        <title>Phylogenetic relationships in the cactus family (Cactaceae) based on evidence from trnK/matK and trnL-trnF sequences.</title>
        <authorList>
            <person name="Nyffeler R."/>
        </authorList>
        <dbReference type="AGRICOLA" id="IND23311510"/>
    </citation>
    <scope>NUCLEOTIDE SEQUENCE [GENOMIC DNA]</scope>
</reference>
<proteinExistence type="inferred from homology"/>
<accession>Q95ED9</accession>
<evidence type="ECO:0000255" key="1">
    <source>
        <dbReference type="HAMAP-Rule" id="MF_01390"/>
    </source>
</evidence>
<geneLocation type="chloroplast"/>
<name>MATK_OPUQU</name>
<sequence>MEEFQRYIELDRSWQHNFFYPLIFQEYIYGFAYDHGLNKSILLENAGHKKYSLLIVKRLITRMYQQNHLILSANHSNQNDFFGHKHKKNLYYQIISEGFAVIVEIPFSLLLISSLGAKEKKIVKSHNLRSIHSIFPFFEDKFLHLNYVLKILIPYPIHLEILVQTLRYWVKDASSLHLLRFFLYEYRNWNSLITPQKYISIFSKKNQRLFLFLYNFHVCEYESIFVFLCNQSSHLRSTSFGALLERIYFYGKLEYLVKVKTFTKDFRLILWLFKDPFLHYVRYRGKSILASKGTSLLMYKWKYYLINFWQCHFSLWSQPRRIYINRLSKHSLDFMSFFSSVRLNSSVVRSQMVENSFLIDNPIKKFDTVVRIIPLVGSLAKAKFCNVLGHPVSKSAWTDLLDSDIIDRFGRICRNLSHYYSGSSRKKSLYRIKYILRLSCARTLARKHKSTVRAFLKRLGSEFLEEFFTEEEKVLSLILPRNFSISRGLYRGPLWYLDIICIHDLANDE</sequence>
<protein>
    <recommendedName>
        <fullName evidence="1">Maturase K</fullName>
    </recommendedName>
    <alternativeName>
        <fullName evidence="1">Intron maturase</fullName>
    </alternativeName>
</protein>
<feature type="chain" id="PRO_0000143559" description="Maturase K">
    <location>
        <begin position="1"/>
        <end position="509"/>
    </location>
</feature>